<dbReference type="EC" id="7.1.2.2" evidence="1"/>
<dbReference type="EMBL" id="CP001177">
    <property type="protein sequence ID" value="ACJ79190.1"/>
    <property type="molecule type" value="Genomic_DNA"/>
</dbReference>
<dbReference type="SMR" id="B7HY67"/>
<dbReference type="KEGG" id="bcr:BCAH187_A5485"/>
<dbReference type="HOGENOM" id="CLU_010091_2_1_9"/>
<dbReference type="Proteomes" id="UP000002214">
    <property type="component" value="Chromosome"/>
</dbReference>
<dbReference type="GO" id="GO:0005886">
    <property type="term" value="C:plasma membrane"/>
    <property type="evidence" value="ECO:0007669"/>
    <property type="project" value="UniProtKB-SubCell"/>
</dbReference>
<dbReference type="GO" id="GO:0045259">
    <property type="term" value="C:proton-transporting ATP synthase complex"/>
    <property type="evidence" value="ECO:0007669"/>
    <property type="project" value="UniProtKB-KW"/>
</dbReference>
<dbReference type="GO" id="GO:0043531">
    <property type="term" value="F:ADP binding"/>
    <property type="evidence" value="ECO:0007669"/>
    <property type="project" value="TreeGrafter"/>
</dbReference>
<dbReference type="GO" id="GO:0005524">
    <property type="term" value="F:ATP binding"/>
    <property type="evidence" value="ECO:0007669"/>
    <property type="project" value="UniProtKB-UniRule"/>
</dbReference>
<dbReference type="GO" id="GO:0046933">
    <property type="term" value="F:proton-transporting ATP synthase activity, rotational mechanism"/>
    <property type="evidence" value="ECO:0007669"/>
    <property type="project" value="UniProtKB-UniRule"/>
</dbReference>
<dbReference type="CDD" id="cd18113">
    <property type="entry name" value="ATP-synt_F1_alpha_C"/>
    <property type="match status" value="1"/>
</dbReference>
<dbReference type="CDD" id="cd18116">
    <property type="entry name" value="ATP-synt_F1_alpha_N"/>
    <property type="match status" value="1"/>
</dbReference>
<dbReference type="CDD" id="cd01132">
    <property type="entry name" value="F1-ATPase_alpha_CD"/>
    <property type="match status" value="1"/>
</dbReference>
<dbReference type="FunFam" id="1.20.150.20:FF:000001">
    <property type="entry name" value="ATP synthase subunit alpha"/>
    <property type="match status" value="1"/>
</dbReference>
<dbReference type="FunFam" id="2.40.30.20:FF:000001">
    <property type="entry name" value="ATP synthase subunit alpha"/>
    <property type="match status" value="1"/>
</dbReference>
<dbReference type="FunFam" id="3.40.50.300:FF:000002">
    <property type="entry name" value="ATP synthase subunit alpha"/>
    <property type="match status" value="1"/>
</dbReference>
<dbReference type="Gene3D" id="2.40.30.20">
    <property type="match status" value="1"/>
</dbReference>
<dbReference type="Gene3D" id="1.20.150.20">
    <property type="entry name" value="ATP synthase alpha/beta chain, C-terminal domain"/>
    <property type="match status" value="1"/>
</dbReference>
<dbReference type="Gene3D" id="3.40.50.300">
    <property type="entry name" value="P-loop containing nucleotide triphosphate hydrolases"/>
    <property type="match status" value="1"/>
</dbReference>
<dbReference type="HAMAP" id="MF_01346">
    <property type="entry name" value="ATP_synth_alpha_bact"/>
    <property type="match status" value="1"/>
</dbReference>
<dbReference type="InterPro" id="IPR023366">
    <property type="entry name" value="ATP_synth_asu-like_sf"/>
</dbReference>
<dbReference type="InterPro" id="IPR000793">
    <property type="entry name" value="ATP_synth_asu_C"/>
</dbReference>
<dbReference type="InterPro" id="IPR038376">
    <property type="entry name" value="ATP_synth_asu_C_sf"/>
</dbReference>
<dbReference type="InterPro" id="IPR033732">
    <property type="entry name" value="ATP_synth_F1_a_nt-bd_dom"/>
</dbReference>
<dbReference type="InterPro" id="IPR005294">
    <property type="entry name" value="ATP_synth_F1_asu"/>
</dbReference>
<dbReference type="InterPro" id="IPR020003">
    <property type="entry name" value="ATPase_a/bsu_AS"/>
</dbReference>
<dbReference type="InterPro" id="IPR004100">
    <property type="entry name" value="ATPase_F1/V1/A1_a/bsu_N"/>
</dbReference>
<dbReference type="InterPro" id="IPR036121">
    <property type="entry name" value="ATPase_F1/V1/A1_a/bsu_N_sf"/>
</dbReference>
<dbReference type="InterPro" id="IPR000194">
    <property type="entry name" value="ATPase_F1/V1/A1_a/bsu_nucl-bd"/>
</dbReference>
<dbReference type="InterPro" id="IPR027417">
    <property type="entry name" value="P-loop_NTPase"/>
</dbReference>
<dbReference type="NCBIfam" id="TIGR00962">
    <property type="entry name" value="atpA"/>
    <property type="match status" value="1"/>
</dbReference>
<dbReference type="NCBIfam" id="NF009884">
    <property type="entry name" value="PRK13343.1"/>
    <property type="match status" value="1"/>
</dbReference>
<dbReference type="PANTHER" id="PTHR48082">
    <property type="entry name" value="ATP SYNTHASE SUBUNIT ALPHA, MITOCHONDRIAL"/>
    <property type="match status" value="1"/>
</dbReference>
<dbReference type="PANTHER" id="PTHR48082:SF2">
    <property type="entry name" value="ATP SYNTHASE SUBUNIT ALPHA, MITOCHONDRIAL"/>
    <property type="match status" value="1"/>
</dbReference>
<dbReference type="Pfam" id="PF00006">
    <property type="entry name" value="ATP-synt_ab"/>
    <property type="match status" value="1"/>
</dbReference>
<dbReference type="Pfam" id="PF00306">
    <property type="entry name" value="ATP-synt_ab_C"/>
    <property type="match status" value="1"/>
</dbReference>
<dbReference type="Pfam" id="PF02874">
    <property type="entry name" value="ATP-synt_ab_N"/>
    <property type="match status" value="1"/>
</dbReference>
<dbReference type="PIRSF" id="PIRSF039088">
    <property type="entry name" value="F_ATPase_subunit_alpha"/>
    <property type="match status" value="1"/>
</dbReference>
<dbReference type="SUPFAM" id="SSF47917">
    <property type="entry name" value="C-terminal domain of alpha and beta subunits of F1 ATP synthase"/>
    <property type="match status" value="1"/>
</dbReference>
<dbReference type="SUPFAM" id="SSF50615">
    <property type="entry name" value="N-terminal domain of alpha and beta subunits of F1 ATP synthase"/>
    <property type="match status" value="1"/>
</dbReference>
<dbReference type="SUPFAM" id="SSF52540">
    <property type="entry name" value="P-loop containing nucleoside triphosphate hydrolases"/>
    <property type="match status" value="1"/>
</dbReference>
<dbReference type="PROSITE" id="PS00152">
    <property type="entry name" value="ATPASE_ALPHA_BETA"/>
    <property type="match status" value="1"/>
</dbReference>
<reference key="1">
    <citation type="submission" date="2008-10" db="EMBL/GenBank/DDBJ databases">
        <title>Genome sequence of Bacillus cereus AH187.</title>
        <authorList>
            <person name="Dodson R.J."/>
            <person name="Durkin A.S."/>
            <person name="Rosovitz M.J."/>
            <person name="Rasko D.A."/>
            <person name="Kolsto A.B."/>
            <person name="Okstad O.A."/>
            <person name="Ravel J."/>
            <person name="Sutton G."/>
        </authorList>
    </citation>
    <scope>NUCLEOTIDE SEQUENCE [LARGE SCALE GENOMIC DNA]</scope>
    <source>
        <strain>AH187</strain>
    </source>
</reference>
<feature type="chain" id="PRO_1000143344" description="ATP synthase subunit alpha">
    <location>
        <begin position="1"/>
        <end position="502"/>
    </location>
</feature>
<feature type="region of interest" description="Disordered" evidence="2">
    <location>
        <begin position="115"/>
        <end position="135"/>
    </location>
</feature>
<feature type="binding site" evidence="1">
    <location>
        <begin position="169"/>
        <end position="176"/>
    </location>
    <ligand>
        <name>ATP</name>
        <dbReference type="ChEBI" id="CHEBI:30616"/>
    </ligand>
</feature>
<feature type="site" description="Required for activity" evidence="1">
    <location>
        <position position="362"/>
    </location>
</feature>
<organism>
    <name type="scientific">Bacillus cereus (strain AH187)</name>
    <dbReference type="NCBI Taxonomy" id="405534"/>
    <lineage>
        <taxon>Bacteria</taxon>
        <taxon>Bacillati</taxon>
        <taxon>Bacillota</taxon>
        <taxon>Bacilli</taxon>
        <taxon>Bacillales</taxon>
        <taxon>Bacillaceae</taxon>
        <taxon>Bacillus</taxon>
        <taxon>Bacillus cereus group</taxon>
    </lineage>
</organism>
<comment type="function">
    <text evidence="1">Produces ATP from ADP in the presence of a proton gradient across the membrane. The alpha chain is a regulatory subunit.</text>
</comment>
<comment type="catalytic activity">
    <reaction evidence="1">
        <text>ATP + H2O + 4 H(+)(in) = ADP + phosphate + 5 H(+)(out)</text>
        <dbReference type="Rhea" id="RHEA:57720"/>
        <dbReference type="ChEBI" id="CHEBI:15377"/>
        <dbReference type="ChEBI" id="CHEBI:15378"/>
        <dbReference type="ChEBI" id="CHEBI:30616"/>
        <dbReference type="ChEBI" id="CHEBI:43474"/>
        <dbReference type="ChEBI" id="CHEBI:456216"/>
        <dbReference type="EC" id="7.1.2.2"/>
    </reaction>
</comment>
<comment type="subunit">
    <text evidence="1">F-type ATPases have 2 components, CF(1) - the catalytic core - and CF(0) - the membrane proton channel. CF(1) has five subunits: alpha(3), beta(3), gamma(1), delta(1), epsilon(1). CF(0) has three main subunits: a(1), b(2) and c(9-12). The alpha and beta chains form an alternating ring which encloses part of the gamma chain. CF(1) is attached to CF(0) by a central stalk formed by the gamma and epsilon chains, while a peripheral stalk is formed by the delta and b chains.</text>
</comment>
<comment type="subcellular location">
    <subcellularLocation>
        <location evidence="1">Cell membrane</location>
        <topology evidence="1">Peripheral membrane protein</topology>
    </subcellularLocation>
</comment>
<comment type="similarity">
    <text evidence="1">Belongs to the ATPase alpha/beta chains family.</text>
</comment>
<name>ATPA_BACC7</name>
<gene>
    <name evidence="1" type="primary">atpA</name>
    <name type="ordered locus">BCAH187_A5485</name>
</gene>
<evidence type="ECO:0000255" key="1">
    <source>
        <dbReference type="HAMAP-Rule" id="MF_01346"/>
    </source>
</evidence>
<evidence type="ECO:0000256" key="2">
    <source>
        <dbReference type="SAM" id="MobiDB-lite"/>
    </source>
</evidence>
<sequence length="502" mass="54643">MSIRAEEISALIKQQIENYQSEIEVSDVGTVIQVGDGIARAHGLDNVMAGELVEFSNGVMGLAQNLEENNVGIIILGPYTEIREGDEVRRTGRIMQVPVGKELIGRVVNPLGQPVDGLGPINTTNTRPIESPAPGVMDRKSVHEPLQTGIKAIDALVPIGRGQRELIIGDRQTGKTAVALDTIINQKDEDMICIYVAIGQKESTVRNVVETLRKHGALEYTIVVTASASQPAPLLYLAPYAGVTMGEEFMYNGKHVLVVYDDLSKQAAAYRELSLLLRRPPGREAYPGDVFYLHSRLLERAAKLSDAKGGGSLTALPFIETQAGDVSAYIPTNVISITDGQIFLQSDLFFSGVRPAIDAGTSVSRVGGSAQIKAMSKVSGTLRLDLASYRELEAFAQFGSDLDKATQAKLNRGARTVEVLKQGLHKPLRVEKQVIILYALTRGFLDDIPVVDITRFEEEFHAWLDSNATDLLEEIRTTKKLADDDKFAAAINGFKKVFVASE</sequence>
<keyword id="KW-0066">ATP synthesis</keyword>
<keyword id="KW-0067">ATP-binding</keyword>
<keyword id="KW-1003">Cell membrane</keyword>
<keyword id="KW-0139">CF(1)</keyword>
<keyword id="KW-0375">Hydrogen ion transport</keyword>
<keyword id="KW-0406">Ion transport</keyword>
<keyword id="KW-0472">Membrane</keyword>
<keyword id="KW-0547">Nucleotide-binding</keyword>
<keyword id="KW-1278">Translocase</keyword>
<keyword id="KW-0813">Transport</keyword>
<accession>B7HY67</accession>
<proteinExistence type="inferred from homology"/>
<protein>
    <recommendedName>
        <fullName evidence="1">ATP synthase subunit alpha</fullName>
        <ecNumber evidence="1">7.1.2.2</ecNumber>
    </recommendedName>
    <alternativeName>
        <fullName evidence="1">ATP synthase F1 sector subunit alpha</fullName>
    </alternativeName>
    <alternativeName>
        <fullName evidence="1">F-ATPase subunit alpha</fullName>
    </alternativeName>
</protein>